<organism>
    <name type="scientific">Bacillus licheniformis (strain ATCC 14580 / DSM 13 / JCM 2505 / CCUG 7422 / NBRC 12200 / NCIMB 9375 / NCTC 10341 / NRRL NRS-1264 / Gibson 46)</name>
    <dbReference type="NCBI Taxonomy" id="279010"/>
    <lineage>
        <taxon>Bacteria</taxon>
        <taxon>Bacillati</taxon>
        <taxon>Bacillota</taxon>
        <taxon>Bacilli</taxon>
        <taxon>Bacillales</taxon>
        <taxon>Bacillaceae</taxon>
        <taxon>Bacillus</taxon>
    </lineage>
</organism>
<name>Y2323_BACLD</name>
<protein>
    <recommendedName>
        <fullName evidence="1">Bacilliredoxin BLi02323/BL05224</fullName>
    </recommendedName>
</protein>
<evidence type="ECO:0000305" key="1"/>
<accession>Q65IB1</accession>
<accession>Q62TR2</accession>
<gene>
    <name type="ordered locus">BLi02323</name>
    <name type="ordered locus">BL05224</name>
</gene>
<keyword id="KW-1185">Reference proteome</keyword>
<feature type="chain" id="PRO_0000271985" description="Bacilliredoxin BLi02323/BL05224">
    <location>
        <begin position="1"/>
        <end position="144"/>
    </location>
</feature>
<reference key="1">
    <citation type="journal article" date="2004" name="J. Mol. Microbiol. Biotechnol.">
        <title>The complete genome sequence of Bacillus licheniformis DSM13, an organism with great industrial potential.</title>
        <authorList>
            <person name="Veith B."/>
            <person name="Herzberg C."/>
            <person name="Steckel S."/>
            <person name="Feesche J."/>
            <person name="Maurer K.H."/>
            <person name="Ehrenreich P."/>
            <person name="Baeumer S."/>
            <person name="Henne A."/>
            <person name="Liesegang H."/>
            <person name="Merkl R."/>
            <person name="Ehrenreich A."/>
            <person name="Gottschalk G."/>
        </authorList>
    </citation>
    <scope>NUCLEOTIDE SEQUENCE [LARGE SCALE GENOMIC DNA]</scope>
    <source>
        <strain>ATCC 14580 / DSM 13 / JCM 2505 / CCUG 7422 / NBRC 12200 / NCIMB 9375 / NCTC 10341 / NRRL NRS-1264 / Gibson 46</strain>
    </source>
</reference>
<reference key="2">
    <citation type="journal article" date="2004" name="Genome Biol.">
        <title>Complete genome sequence of the industrial bacterium Bacillus licheniformis and comparisons with closely related Bacillus species.</title>
        <authorList>
            <person name="Rey M.W."/>
            <person name="Ramaiya P."/>
            <person name="Nelson B.A."/>
            <person name="Brody-Karpin S.D."/>
            <person name="Zaretsky E.J."/>
            <person name="Tang M."/>
            <person name="Lopez de Leon A."/>
            <person name="Xiang H."/>
            <person name="Gusti V."/>
            <person name="Clausen I.G."/>
            <person name="Olsen P.B."/>
            <person name="Rasmussen M.D."/>
            <person name="Andersen J.T."/>
            <person name="Joergensen P.L."/>
            <person name="Larsen T.S."/>
            <person name="Sorokin A."/>
            <person name="Bolotin A."/>
            <person name="Lapidus A."/>
            <person name="Galleron N."/>
            <person name="Ehrlich S.D."/>
            <person name="Berka R.M."/>
        </authorList>
    </citation>
    <scope>NUCLEOTIDE SEQUENCE [LARGE SCALE GENOMIC DNA]</scope>
    <source>
        <strain>ATCC 14580 / DSM 13 / JCM 2505 / CCUG 7422 / NBRC 12200 / NCIMB 9375 / NCTC 10341 / NRRL NRS-1264 / Gibson 46</strain>
    </source>
</reference>
<sequence length="144" mass="15968">MSTAYEEYMRQLVLPMRQELVQAGFKELTTAEEVETFMEDAEGTTFVVVNSVCGCAAGLARPAAVQAVSGSEKGPDETVTVFAGQDREATAKMREYFEGYEPSSPSMALLKGKEVVHFIPREQIEGREMTEIMKNITDAFEKHC</sequence>
<comment type="similarity">
    <text evidence="1">Belongs to the bacilliredoxin family.</text>
</comment>
<proteinExistence type="inferred from homology"/>
<dbReference type="EMBL" id="AE017333">
    <property type="protein sequence ID" value="AAU41203.1"/>
    <property type="molecule type" value="Genomic_DNA"/>
</dbReference>
<dbReference type="EMBL" id="CP000002">
    <property type="protein sequence ID" value="AAU23847.1"/>
    <property type="molecule type" value="Genomic_DNA"/>
</dbReference>
<dbReference type="RefSeq" id="WP_003182820.1">
    <property type="nucleotide sequence ID" value="NC_006322.1"/>
</dbReference>
<dbReference type="SMR" id="Q65IB1"/>
<dbReference type="STRING" id="279010.BL05224"/>
<dbReference type="KEGG" id="bld:BLi02323"/>
<dbReference type="KEGG" id="bli:BL05224"/>
<dbReference type="eggNOG" id="ENOG502ZBVN">
    <property type="taxonomic scope" value="Bacteria"/>
</dbReference>
<dbReference type="HOGENOM" id="CLU_132521_0_0_9"/>
<dbReference type="Proteomes" id="UP000000606">
    <property type="component" value="Chromosome"/>
</dbReference>
<dbReference type="GO" id="GO:0045454">
    <property type="term" value="P:cell redox homeostasis"/>
    <property type="evidence" value="ECO:0000250"/>
    <property type="project" value="UniProtKB"/>
</dbReference>
<dbReference type="Gene3D" id="6.10.250.2150">
    <property type="match status" value="1"/>
</dbReference>
<dbReference type="Gene3D" id="3.40.30.10">
    <property type="entry name" value="Glutaredoxin"/>
    <property type="match status" value="1"/>
</dbReference>
<dbReference type="InterPro" id="IPR009474">
    <property type="entry name" value="BrxB/BrxA"/>
</dbReference>
<dbReference type="NCBIfam" id="TIGR04191">
    <property type="entry name" value="YphP_YqiW"/>
    <property type="match status" value="1"/>
</dbReference>
<dbReference type="PANTHER" id="PTHR40052:SF2">
    <property type="entry name" value="BACILLIREDOXIN BRXA"/>
    <property type="match status" value="1"/>
</dbReference>
<dbReference type="PANTHER" id="PTHR40052">
    <property type="entry name" value="UPF0403 PROTEIN YQIW-RELATED"/>
    <property type="match status" value="1"/>
</dbReference>
<dbReference type="Pfam" id="PF06491">
    <property type="entry name" value="Disulph_isomer"/>
    <property type="match status" value="1"/>
</dbReference>